<protein>
    <recommendedName>
        <fullName evidence="1">Pyrimidine/purine nucleoside phosphorylase</fullName>
        <ecNumber evidence="1">2.4.2.1</ecNumber>
        <ecNumber evidence="1">2.4.2.2</ecNumber>
    </recommendedName>
    <alternativeName>
        <fullName evidence="1">Adenosine phosphorylase</fullName>
    </alternativeName>
    <alternativeName>
        <fullName evidence="1">Cytidine phosphorylase</fullName>
    </alternativeName>
    <alternativeName>
        <fullName evidence="1">Guanosine phosphorylase</fullName>
    </alternativeName>
    <alternativeName>
        <fullName evidence="1">Inosine phosphorylase</fullName>
    </alternativeName>
    <alternativeName>
        <fullName evidence="1">Thymidine phosphorylase</fullName>
    </alternativeName>
    <alternativeName>
        <fullName evidence="1">Uridine phosphorylase</fullName>
    </alternativeName>
    <alternativeName>
        <fullName evidence="1">Xanthosine phosphorylase</fullName>
    </alternativeName>
</protein>
<gene>
    <name evidence="1" type="primary">ppnP</name>
    <name type="ordered locus">Reut_A2762</name>
</gene>
<reference key="1">
    <citation type="journal article" date="2010" name="PLoS ONE">
        <title>The complete multipartite genome sequence of Cupriavidus necator JMP134, a versatile pollutant degrader.</title>
        <authorList>
            <person name="Lykidis A."/>
            <person name="Perez-Pantoja D."/>
            <person name="Ledger T."/>
            <person name="Mavromatis K."/>
            <person name="Anderson I.J."/>
            <person name="Ivanova N.N."/>
            <person name="Hooper S.D."/>
            <person name="Lapidus A."/>
            <person name="Lucas S."/>
            <person name="Gonzalez B."/>
            <person name="Kyrpides N.C."/>
        </authorList>
    </citation>
    <scope>NUCLEOTIDE SEQUENCE [LARGE SCALE GENOMIC DNA]</scope>
    <source>
        <strain>JMP134 / LMG 1197</strain>
    </source>
</reference>
<name>PPNP_CUPPJ</name>
<sequence length="105" mass="11474">MEVSQFDNVSVVKKANLYFDGKCVSHTVLFSDGTRKTLGVIFPATLTFNTGAPEIMEINAGVCRVRLAGSEAWQTYGAGQQFDVPGNSSFDIEVQETLDYVCHFG</sequence>
<keyword id="KW-0328">Glycosyltransferase</keyword>
<keyword id="KW-0808">Transferase</keyword>
<organism>
    <name type="scientific">Cupriavidus pinatubonensis (strain JMP 134 / LMG 1197)</name>
    <name type="common">Cupriavidus necator (strain JMP 134)</name>
    <dbReference type="NCBI Taxonomy" id="264198"/>
    <lineage>
        <taxon>Bacteria</taxon>
        <taxon>Pseudomonadati</taxon>
        <taxon>Pseudomonadota</taxon>
        <taxon>Betaproteobacteria</taxon>
        <taxon>Burkholderiales</taxon>
        <taxon>Burkholderiaceae</taxon>
        <taxon>Cupriavidus</taxon>
    </lineage>
</organism>
<feature type="chain" id="PRO_0000292791" description="Pyrimidine/purine nucleoside phosphorylase">
    <location>
        <begin position="1"/>
        <end position="105"/>
    </location>
</feature>
<proteinExistence type="inferred from homology"/>
<accession>Q46XL0</accession>
<comment type="function">
    <text evidence="1">Catalyzes the phosphorolysis of diverse nucleosides, yielding D-ribose 1-phosphate and the respective free bases. Can use uridine, adenosine, guanosine, cytidine, thymidine, inosine and xanthosine as substrates. Also catalyzes the reverse reactions.</text>
</comment>
<comment type="catalytic activity">
    <reaction evidence="1">
        <text>a purine D-ribonucleoside + phosphate = a purine nucleobase + alpha-D-ribose 1-phosphate</text>
        <dbReference type="Rhea" id="RHEA:19805"/>
        <dbReference type="ChEBI" id="CHEBI:26386"/>
        <dbReference type="ChEBI" id="CHEBI:43474"/>
        <dbReference type="ChEBI" id="CHEBI:57720"/>
        <dbReference type="ChEBI" id="CHEBI:142355"/>
        <dbReference type="EC" id="2.4.2.1"/>
    </reaction>
</comment>
<comment type="catalytic activity">
    <reaction evidence="1">
        <text>adenosine + phosphate = alpha-D-ribose 1-phosphate + adenine</text>
        <dbReference type="Rhea" id="RHEA:27642"/>
        <dbReference type="ChEBI" id="CHEBI:16335"/>
        <dbReference type="ChEBI" id="CHEBI:16708"/>
        <dbReference type="ChEBI" id="CHEBI:43474"/>
        <dbReference type="ChEBI" id="CHEBI:57720"/>
        <dbReference type="EC" id="2.4.2.1"/>
    </reaction>
</comment>
<comment type="catalytic activity">
    <reaction evidence="1">
        <text>cytidine + phosphate = cytosine + alpha-D-ribose 1-phosphate</text>
        <dbReference type="Rhea" id="RHEA:52540"/>
        <dbReference type="ChEBI" id="CHEBI:16040"/>
        <dbReference type="ChEBI" id="CHEBI:17562"/>
        <dbReference type="ChEBI" id="CHEBI:43474"/>
        <dbReference type="ChEBI" id="CHEBI:57720"/>
        <dbReference type="EC" id="2.4.2.2"/>
    </reaction>
</comment>
<comment type="catalytic activity">
    <reaction evidence="1">
        <text>guanosine + phosphate = alpha-D-ribose 1-phosphate + guanine</text>
        <dbReference type="Rhea" id="RHEA:13233"/>
        <dbReference type="ChEBI" id="CHEBI:16235"/>
        <dbReference type="ChEBI" id="CHEBI:16750"/>
        <dbReference type="ChEBI" id="CHEBI:43474"/>
        <dbReference type="ChEBI" id="CHEBI:57720"/>
        <dbReference type="EC" id="2.4.2.1"/>
    </reaction>
</comment>
<comment type="catalytic activity">
    <reaction evidence="1">
        <text>inosine + phosphate = alpha-D-ribose 1-phosphate + hypoxanthine</text>
        <dbReference type="Rhea" id="RHEA:27646"/>
        <dbReference type="ChEBI" id="CHEBI:17368"/>
        <dbReference type="ChEBI" id="CHEBI:17596"/>
        <dbReference type="ChEBI" id="CHEBI:43474"/>
        <dbReference type="ChEBI" id="CHEBI:57720"/>
        <dbReference type="EC" id="2.4.2.1"/>
    </reaction>
</comment>
<comment type="catalytic activity">
    <reaction evidence="1">
        <text>thymidine + phosphate = 2-deoxy-alpha-D-ribose 1-phosphate + thymine</text>
        <dbReference type="Rhea" id="RHEA:16037"/>
        <dbReference type="ChEBI" id="CHEBI:17748"/>
        <dbReference type="ChEBI" id="CHEBI:17821"/>
        <dbReference type="ChEBI" id="CHEBI:43474"/>
        <dbReference type="ChEBI" id="CHEBI:57259"/>
        <dbReference type="EC" id="2.4.2.2"/>
    </reaction>
</comment>
<comment type="catalytic activity">
    <reaction evidence="1">
        <text>uridine + phosphate = alpha-D-ribose 1-phosphate + uracil</text>
        <dbReference type="Rhea" id="RHEA:24388"/>
        <dbReference type="ChEBI" id="CHEBI:16704"/>
        <dbReference type="ChEBI" id="CHEBI:17568"/>
        <dbReference type="ChEBI" id="CHEBI:43474"/>
        <dbReference type="ChEBI" id="CHEBI:57720"/>
        <dbReference type="EC" id="2.4.2.2"/>
    </reaction>
</comment>
<comment type="catalytic activity">
    <reaction evidence="1">
        <text>xanthosine + phosphate = alpha-D-ribose 1-phosphate + xanthine</text>
        <dbReference type="Rhea" id="RHEA:27638"/>
        <dbReference type="ChEBI" id="CHEBI:17712"/>
        <dbReference type="ChEBI" id="CHEBI:18107"/>
        <dbReference type="ChEBI" id="CHEBI:43474"/>
        <dbReference type="ChEBI" id="CHEBI:57720"/>
        <dbReference type="EC" id="2.4.2.1"/>
    </reaction>
</comment>
<comment type="similarity">
    <text evidence="1">Belongs to the nucleoside phosphorylase PpnP family.</text>
</comment>
<dbReference type="EC" id="2.4.2.1" evidence="1"/>
<dbReference type="EC" id="2.4.2.2" evidence="1"/>
<dbReference type="EMBL" id="CP000090">
    <property type="protein sequence ID" value="AAZ62123.1"/>
    <property type="molecule type" value="Genomic_DNA"/>
</dbReference>
<dbReference type="SMR" id="Q46XL0"/>
<dbReference type="STRING" id="264198.Reut_A2762"/>
<dbReference type="KEGG" id="reu:Reut_A2762"/>
<dbReference type="eggNOG" id="COG3123">
    <property type="taxonomic scope" value="Bacteria"/>
</dbReference>
<dbReference type="HOGENOM" id="CLU_157874_1_0_4"/>
<dbReference type="GO" id="GO:0005829">
    <property type="term" value="C:cytosol"/>
    <property type="evidence" value="ECO:0007669"/>
    <property type="project" value="TreeGrafter"/>
</dbReference>
<dbReference type="GO" id="GO:0047975">
    <property type="term" value="F:guanosine phosphorylase activity"/>
    <property type="evidence" value="ECO:0007669"/>
    <property type="project" value="UniProtKB-EC"/>
</dbReference>
<dbReference type="GO" id="GO:0004731">
    <property type="term" value="F:purine-nucleoside phosphorylase activity"/>
    <property type="evidence" value="ECO:0007669"/>
    <property type="project" value="UniProtKB-UniRule"/>
</dbReference>
<dbReference type="GO" id="GO:0009032">
    <property type="term" value="F:thymidine phosphorylase activity"/>
    <property type="evidence" value="ECO:0007669"/>
    <property type="project" value="UniProtKB-EC"/>
</dbReference>
<dbReference type="GO" id="GO:0004850">
    <property type="term" value="F:uridine phosphorylase activity"/>
    <property type="evidence" value="ECO:0007669"/>
    <property type="project" value="UniProtKB-EC"/>
</dbReference>
<dbReference type="CDD" id="cd20296">
    <property type="entry name" value="cupin_PpnP-like"/>
    <property type="match status" value="1"/>
</dbReference>
<dbReference type="Gene3D" id="2.60.120.10">
    <property type="entry name" value="Jelly Rolls"/>
    <property type="match status" value="1"/>
</dbReference>
<dbReference type="HAMAP" id="MF_01537">
    <property type="entry name" value="Nucleos_phosphorylase_PpnP"/>
    <property type="match status" value="1"/>
</dbReference>
<dbReference type="InterPro" id="IPR009664">
    <property type="entry name" value="Ppnp"/>
</dbReference>
<dbReference type="InterPro" id="IPR014710">
    <property type="entry name" value="RmlC-like_jellyroll"/>
</dbReference>
<dbReference type="InterPro" id="IPR011051">
    <property type="entry name" value="RmlC_Cupin_sf"/>
</dbReference>
<dbReference type="PANTHER" id="PTHR36540">
    <property type="entry name" value="PYRIMIDINE/PURINE NUCLEOSIDE PHOSPHORYLASE"/>
    <property type="match status" value="1"/>
</dbReference>
<dbReference type="PANTHER" id="PTHR36540:SF1">
    <property type="entry name" value="PYRIMIDINE_PURINE NUCLEOSIDE PHOSPHORYLASE"/>
    <property type="match status" value="1"/>
</dbReference>
<dbReference type="Pfam" id="PF06865">
    <property type="entry name" value="Ppnp"/>
    <property type="match status" value="1"/>
</dbReference>
<dbReference type="SUPFAM" id="SSF51182">
    <property type="entry name" value="RmlC-like cupins"/>
    <property type="match status" value="1"/>
</dbReference>
<evidence type="ECO:0000255" key="1">
    <source>
        <dbReference type="HAMAP-Rule" id="MF_01537"/>
    </source>
</evidence>